<sequence length="206" mass="21275">MPLRDDGVLRGSLVLAVFTLFGLGLAYSLIATGITGALFSEQATGSLMRVDARVVGSALVAQPFTDARYFQPRPSAAKYDLTAAAGSNQARSNPDLLARIATTRAQVAARDGIAPEAVPGELLTQSGSGLDPHLSPAGAQVQIRRVAAARGWPEQRVAALVQATTEAAPQFGLLGQPRVNVLALNLALDQAGNGESGRGNGVKQAH</sequence>
<gene>
    <name evidence="1" type="primary">kdpC</name>
    <name type="ordered locus">XAC0758</name>
</gene>
<evidence type="ECO:0000255" key="1">
    <source>
        <dbReference type="HAMAP-Rule" id="MF_00276"/>
    </source>
</evidence>
<organism>
    <name type="scientific">Xanthomonas axonopodis pv. citri (strain 306)</name>
    <dbReference type="NCBI Taxonomy" id="190486"/>
    <lineage>
        <taxon>Bacteria</taxon>
        <taxon>Pseudomonadati</taxon>
        <taxon>Pseudomonadota</taxon>
        <taxon>Gammaproteobacteria</taxon>
        <taxon>Lysobacterales</taxon>
        <taxon>Lysobacteraceae</taxon>
        <taxon>Xanthomonas</taxon>
    </lineage>
</organism>
<protein>
    <recommendedName>
        <fullName evidence="1">Potassium-transporting ATPase KdpC subunit</fullName>
    </recommendedName>
    <alternativeName>
        <fullName evidence="1">ATP phosphohydrolase [potassium-transporting] C chain</fullName>
    </alternativeName>
    <alternativeName>
        <fullName evidence="1">Potassium-binding and translocating subunit C</fullName>
    </alternativeName>
    <alternativeName>
        <fullName evidence="1">Potassium-translocating ATPase C chain</fullName>
    </alternativeName>
</protein>
<proteinExistence type="inferred from homology"/>
<comment type="function">
    <text evidence="1">Part of the high-affinity ATP-driven potassium transport (or Kdp) system, which catalyzes the hydrolysis of ATP coupled with the electrogenic transport of potassium into the cytoplasm. This subunit acts as a catalytic chaperone that increases the ATP-binding affinity of the ATP-hydrolyzing subunit KdpB by the formation of a transient KdpB/KdpC/ATP ternary complex.</text>
</comment>
<comment type="subunit">
    <text evidence="1">The system is composed of three essential subunits: KdpA, KdpB and KdpC.</text>
</comment>
<comment type="subcellular location">
    <subcellularLocation>
        <location evidence="1">Cell inner membrane</location>
        <topology evidence="1">Single-pass membrane protein</topology>
    </subcellularLocation>
</comment>
<comment type="similarity">
    <text evidence="1">Belongs to the KdpC family.</text>
</comment>
<feature type="chain" id="PRO_0000197022" description="Potassium-transporting ATPase KdpC subunit">
    <location>
        <begin position="1"/>
        <end position="206"/>
    </location>
</feature>
<feature type="transmembrane region" description="Helical" evidence="1">
    <location>
        <begin position="14"/>
        <end position="34"/>
    </location>
</feature>
<name>KDPC_XANAC</name>
<dbReference type="EMBL" id="AE008923">
    <property type="protein sequence ID" value="AAM35647.1"/>
    <property type="molecule type" value="Genomic_DNA"/>
</dbReference>
<dbReference type="SMR" id="Q8PPC8"/>
<dbReference type="KEGG" id="xac:XAC0758"/>
<dbReference type="eggNOG" id="COG2156">
    <property type="taxonomic scope" value="Bacteria"/>
</dbReference>
<dbReference type="HOGENOM" id="CLU_077094_2_0_6"/>
<dbReference type="Proteomes" id="UP000000576">
    <property type="component" value="Chromosome"/>
</dbReference>
<dbReference type="GO" id="GO:0005886">
    <property type="term" value="C:plasma membrane"/>
    <property type="evidence" value="ECO:0007669"/>
    <property type="project" value="UniProtKB-SubCell"/>
</dbReference>
<dbReference type="GO" id="GO:0005524">
    <property type="term" value="F:ATP binding"/>
    <property type="evidence" value="ECO:0007669"/>
    <property type="project" value="UniProtKB-UniRule"/>
</dbReference>
<dbReference type="GO" id="GO:0008556">
    <property type="term" value="F:P-type potassium transmembrane transporter activity"/>
    <property type="evidence" value="ECO:0007669"/>
    <property type="project" value="InterPro"/>
</dbReference>
<dbReference type="HAMAP" id="MF_00276">
    <property type="entry name" value="KdpC"/>
    <property type="match status" value="1"/>
</dbReference>
<dbReference type="InterPro" id="IPR003820">
    <property type="entry name" value="KdpC"/>
</dbReference>
<dbReference type="NCBIfam" id="TIGR00681">
    <property type="entry name" value="kdpC"/>
    <property type="match status" value="1"/>
</dbReference>
<dbReference type="NCBIfam" id="NF001454">
    <property type="entry name" value="PRK00315.1"/>
    <property type="match status" value="1"/>
</dbReference>
<dbReference type="PANTHER" id="PTHR30042">
    <property type="entry name" value="POTASSIUM-TRANSPORTING ATPASE C CHAIN"/>
    <property type="match status" value="1"/>
</dbReference>
<dbReference type="PANTHER" id="PTHR30042:SF2">
    <property type="entry name" value="POTASSIUM-TRANSPORTING ATPASE KDPC SUBUNIT"/>
    <property type="match status" value="1"/>
</dbReference>
<dbReference type="Pfam" id="PF02669">
    <property type="entry name" value="KdpC"/>
    <property type="match status" value="1"/>
</dbReference>
<dbReference type="PIRSF" id="PIRSF001296">
    <property type="entry name" value="K_ATPase_KdpC"/>
    <property type="match status" value="1"/>
</dbReference>
<accession>Q8PPC8</accession>
<reference key="1">
    <citation type="journal article" date="2002" name="Nature">
        <title>Comparison of the genomes of two Xanthomonas pathogens with differing host specificities.</title>
        <authorList>
            <person name="da Silva A.C.R."/>
            <person name="Ferro J.A."/>
            <person name="Reinach F.C."/>
            <person name="Farah C.S."/>
            <person name="Furlan L.R."/>
            <person name="Quaggio R.B."/>
            <person name="Monteiro-Vitorello C.B."/>
            <person name="Van Sluys M.A."/>
            <person name="Almeida N.F. Jr."/>
            <person name="Alves L.M.C."/>
            <person name="do Amaral A.M."/>
            <person name="Bertolini M.C."/>
            <person name="Camargo L.E.A."/>
            <person name="Camarotte G."/>
            <person name="Cannavan F."/>
            <person name="Cardozo J."/>
            <person name="Chambergo F."/>
            <person name="Ciapina L.P."/>
            <person name="Cicarelli R.M.B."/>
            <person name="Coutinho L.L."/>
            <person name="Cursino-Santos J.R."/>
            <person name="El-Dorry H."/>
            <person name="Faria J.B."/>
            <person name="Ferreira A.J.S."/>
            <person name="Ferreira R.C.C."/>
            <person name="Ferro M.I.T."/>
            <person name="Formighieri E.F."/>
            <person name="Franco M.C."/>
            <person name="Greggio C.C."/>
            <person name="Gruber A."/>
            <person name="Katsuyama A.M."/>
            <person name="Kishi L.T."/>
            <person name="Leite R.P."/>
            <person name="Lemos E.G.M."/>
            <person name="Lemos M.V.F."/>
            <person name="Locali E.C."/>
            <person name="Machado M.A."/>
            <person name="Madeira A.M.B.N."/>
            <person name="Martinez-Rossi N.M."/>
            <person name="Martins E.C."/>
            <person name="Meidanis J."/>
            <person name="Menck C.F.M."/>
            <person name="Miyaki C.Y."/>
            <person name="Moon D.H."/>
            <person name="Moreira L.M."/>
            <person name="Novo M.T.M."/>
            <person name="Okura V.K."/>
            <person name="Oliveira M.C."/>
            <person name="Oliveira V.R."/>
            <person name="Pereira H.A."/>
            <person name="Rossi A."/>
            <person name="Sena J.A.D."/>
            <person name="Silva C."/>
            <person name="de Souza R.F."/>
            <person name="Spinola L.A.F."/>
            <person name="Takita M.A."/>
            <person name="Tamura R.E."/>
            <person name="Teixeira E.C."/>
            <person name="Tezza R.I.D."/>
            <person name="Trindade dos Santos M."/>
            <person name="Truffi D."/>
            <person name="Tsai S.M."/>
            <person name="White F.F."/>
            <person name="Setubal J.C."/>
            <person name="Kitajima J.P."/>
        </authorList>
    </citation>
    <scope>NUCLEOTIDE SEQUENCE [LARGE SCALE GENOMIC DNA]</scope>
    <source>
        <strain>306</strain>
    </source>
</reference>
<keyword id="KW-0067">ATP-binding</keyword>
<keyword id="KW-0997">Cell inner membrane</keyword>
<keyword id="KW-1003">Cell membrane</keyword>
<keyword id="KW-0406">Ion transport</keyword>
<keyword id="KW-0472">Membrane</keyword>
<keyword id="KW-0547">Nucleotide-binding</keyword>
<keyword id="KW-0630">Potassium</keyword>
<keyword id="KW-0633">Potassium transport</keyword>
<keyword id="KW-0812">Transmembrane</keyword>
<keyword id="KW-1133">Transmembrane helix</keyword>
<keyword id="KW-0813">Transport</keyword>